<sequence>MDAESIEWKLTANLRNGPTFFQPLADSIEPLQFKLIGSDTVATAFPVFDTKYIPDSLINYLFKLFNLEIESGKTYPQLHSLTKQGFLNYWFHSFAVVVLQTDEKFIQDNQDWNSVLLGTFYIKPNYAPRCSHNCNAGFLVNGAHRGQKVGYRLAQVYLNWAPLLGYKYSIFNLVFVTNQASWKIWDKLNFQRIGLVPHAGILNGFSEPVDAIIYGKDLTKIEPEFLSME</sequence>
<organism>
    <name type="scientific">Saccharomyces cerevisiae</name>
    <name type="common">Baker's yeast</name>
    <dbReference type="NCBI Taxonomy" id="4932"/>
    <lineage>
        <taxon>Eukaryota</taxon>
        <taxon>Fungi</taxon>
        <taxon>Dikarya</taxon>
        <taxon>Ascomycota</taxon>
        <taxon>Saccharomycotina</taxon>
        <taxon>Saccharomycetes</taxon>
        <taxon>Saccharomycetales</taxon>
        <taxon>Saccharomycetaceae</taxon>
        <taxon>Saccharomyces</taxon>
    </lineage>
</organism>
<gene>
    <name evidence="9" type="primary">MPR1</name>
</gene>
<reference key="1">
    <citation type="journal article" date="2000" name="J. Bacteriol.">
        <title>Saccharomyces cerevisiae sigma 1278b has novel genes of the N-acetyltransferase gene superfamily required for L-proline analogue resistance.</title>
        <authorList>
            <person name="Takagi H."/>
            <person name="Shichiri M."/>
            <person name="Takemura M."/>
            <person name="Mohri M."/>
            <person name="Nakamori S."/>
        </authorList>
    </citation>
    <scope>NUCLEOTIDE SEQUENCE [GENOMIC DNA]</scope>
    <scope>VARIANT GLU-85</scope>
    <source>
        <strain>Sigma 1278B</strain>
    </source>
</reference>
<reference key="2">
    <citation type="journal article" date="2001" name="J. Biol. Chem.">
        <title>A novel acetyltransferase found in Saccharomyces cerevisiae Sigma1278b that detoxifies a proline analogue, azetidine-2-carboxylic acid.</title>
        <authorList>
            <person name="Shichiri M."/>
            <person name="Hoshikawa C."/>
            <person name="Nakamori S."/>
            <person name="Takagi H."/>
        </authorList>
    </citation>
    <scope>FUNCTION</scope>
    <scope>SUBCELLULAR LOCATION</scope>
    <scope>MUTAGENESIS OF ARG-145; GLY-146; GLN-147; LYS-148; VAL-149 AND GLY-150</scope>
</reference>
<reference key="3">
    <citation type="journal article" date="2003" name="J. Biochem.">
        <title>Characterization of novel acetyltransferases found in budding and fission yeasts that detoxify a proline analogue, azetidine-2-carboxylic acid.</title>
        <authorList>
            <person name="Nomura M."/>
            <person name="Nakamori S."/>
            <person name="Takagi H."/>
        </authorList>
    </citation>
    <scope>FUNCTION</scope>
    <scope>SUBUNIT</scope>
    <scope>BIOPHYSICOCHEMICAL PROPERTIES</scope>
</reference>
<reference key="4">
    <citation type="journal article" date="2004" name="Proc. Natl. Acad. Sci. U.S.A.">
        <title>Role of the yeast acetyltransferase Mpr1 in oxidative stress: regulation of oxygen reactive species caused by a toxic proline catabolism intermediate.</title>
        <authorList>
            <person name="Nomura M."/>
            <person name="Takagi H."/>
        </authorList>
    </citation>
    <scope>FUNCTION</scope>
    <scope>CATALYTIC ACTIVITY</scope>
    <scope>BIOPHYSICOCHEMICAL PROPERTIES</scope>
</reference>
<reference key="5">
    <citation type="journal article" date="2010" name="FEMS Yeast Res.">
        <title>An antioxidative mechanism mediated by the yeast N-acetyltransferase Mpr1: oxidative stress-induced arginine synthesis and its physiological role.</title>
        <authorList>
            <person name="Nishimura A."/>
            <person name="Kotani T."/>
            <person name="Sasano Y."/>
            <person name="Takagi H."/>
        </authorList>
    </citation>
    <scope>FUNCTION</scope>
</reference>
<reference key="6">
    <citation type="journal article" date="2012" name="FEBS Lett.">
        <title>The proline metabolism intermediate Delta1-pyrroline-5-carboxylate directly inhibits the mitochondrial respiration in budding yeast.</title>
        <authorList>
            <person name="Nishimura A."/>
            <person name="Nasuno R."/>
            <person name="Takagi H."/>
        </authorList>
    </citation>
    <scope>FUNCTION</scope>
</reference>
<reference evidence="12 13 14" key="7">
    <citation type="journal article" date="2013" name="Proc. Natl. Acad. Sci. U.S.A.">
        <title>Structural and functional analysis of the yeast N-acetyltransferase Mpr1 involved in oxidative stress tolerance via proline metabolism.</title>
        <authorList>
            <person name="Nasuno R."/>
            <person name="Hirano Y."/>
            <person name="Itoh T."/>
            <person name="Hakoshima T."/>
            <person name="Hibi T."/>
            <person name="Takagi H."/>
        </authorList>
    </citation>
    <scope>X-RAY CRYSTALLOGRAPHY (1.90 ANGSTROMS) IN COMPLEX WITH MAGNESIUM AND SUBSTRATE</scope>
    <scope>SUBUNIT</scope>
    <scope>MUTAGENESIS OF ASN-135 AND ASN-178</scope>
</reference>
<feature type="chain" id="PRO_0000446015" description="N-acetyltransferase MPR1">
    <location>
        <begin position="1"/>
        <end position="229"/>
    </location>
</feature>
<feature type="domain" description="N-acetyltransferase" evidence="1">
    <location>
        <begin position="65"/>
        <end position="219"/>
    </location>
</feature>
<feature type="binding site" evidence="8 13">
    <location>
        <position position="135"/>
    </location>
    <ligand>
        <name>substrate</name>
    </ligand>
</feature>
<feature type="binding site" evidence="11">
    <location>
        <begin position="145"/>
        <end position="150"/>
    </location>
    <ligand>
        <name>CoA</name>
        <dbReference type="ChEBI" id="CHEBI:57287"/>
    </ligand>
</feature>
<feature type="binding site" evidence="8 13">
    <location>
        <begin position="172"/>
        <end position="173"/>
    </location>
    <ligand>
        <name>substrate</name>
    </ligand>
</feature>
<feature type="sequence variant" description="In allele MPR2." evidence="2">
    <original>G</original>
    <variation>E</variation>
    <location>
        <position position="85"/>
    </location>
</feature>
<feature type="mutagenesis site" description="Increases the KM for AZC 20-fold." evidence="8">
    <original>N</original>
    <variation>A</variation>
    <location>
        <position position="135"/>
    </location>
</feature>
<feature type="mutagenesis site" description="Abolishes AZC acetyltransferase activity." evidence="8">
    <original>N</original>
    <variation>D</variation>
    <location>
        <position position="135"/>
    </location>
</feature>
<feature type="mutagenesis site" description="Abolishes acetyltransferase activity." evidence="3">
    <original>R</original>
    <variation>A</variation>
    <location>
        <position position="145"/>
    </location>
</feature>
<feature type="mutagenesis site" description="No effect." evidence="3">
    <original>G</original>
    <variation>A</variation>
    <location>
        <position position="146"/>
    </location>
</feature>
<feature type="mutagenesis site" description="No effect." evidence="3">
    <original>Q</original>
    <variation>A</variation>
    <location>
        <position position="147"/>
    </location>
</feature>
<feature type="mutagenesis site" description="No effect." evidence="3">
    <original>K</original>
    <variation>A</variation>
    <variation>G</variation>
    <location>
        <position position="148"/>
    </location>
</feature>
<feature type="mutagenesis site" description="Abolishes acetyltransferase activity." evidence="3">
    <original>V</original>
    <variation>A</variation>
    <location>
        <position position="149"/>
    </location>
</feature>
<feature type="mutagenesis site" description="Abolishes acetyltransferase activity." evidence="3">
    <original>G</original>
    <variation>A</variation>
    <location>
        <position position="150"/>
    </location>
</feature>
<feature type="mutagenesis site" description="Causes a 40-fold reduction in the apparent kcat value." evidence="8">
    <original>N</original>
    <variation>A</variation>
    <location>
        <position position="178"/>
    </location>
</feature>
<feature type="helix" evidence="15">
    <location>
        <begin position="7"/>
        <end position="9"/>
    </location>
</feature>
<feature type="helix" evidence="15">
    <location>
        <begin position="11"/>
        <end position="13"/>
    </location>
</feature>
<feature type="strand" evidence="15">
    <location>
        <begin position="24"/>
        <end position="27"/>
    </location>
</feature>
<feature type="strand" evidence="15">
    <location>
        <begin position="31"/>
        <end position="34"/>
    </location>
</feature>
<feature type="strand" evidence="15">
    <location>
        <begin position="41"/>
        <end position="49"/>
    </location>
</feature>
<feature type="helix" evidence="15">
    <location>
        <begin position="50"/>
        <end position="52"/>
    </location>
</feature>
<feature type="helix" evidence="15">
    <location>
        <begin position="55"/>
        <end position="71"/>
    </location>
</feature>
<feature type="strand" evidence="15">
    <location>
        <begin position="73"/>
        <end position="76"/>
    </location>
</feature>
<feature type="helix" evidence="15">
    <location>
        <begin position="83"/>
        <end position="90"/>
    </location>
</feature>
<feature type="strand" evidence="15">
    <location>
        <begin position="92"/>
        <end position="100"/>
    </location>
</feature>
<feature type="helix" evidence="15">
    <location>
        <begin position="112"/>
        <end position="115"/>
    </location>
</feature>
<feature type="strand" evidence="15">
    <location>
        <begin position="116"/>
        <end position="127"/>
    </location>
</feature>
<feature type="helix" evidence="15">
    <location>
        <begin position="128"/>
        <end position="130"/>
    </location>
</feature>
<feature type="strand" evidence="15">
    <location>
        <begin position="133"/>
        <end position="140"/>
    </location>
</feature>
<feature type="helix" evidence="15">
    <location>
        <begin position="142"/>
        <end position="144"/>
    </location>
</feature>
<feature type="helix" evidence="15">
    <location>
        <begin position="149"/>
        <end position="160"/>
    </location>
</feature>
<feature type="helix" evidence="15">
    <location>
        <begin position="162"/>
        <end position="164"/>
    </location>
</feature>
<feature type="strand" evidence="15">
    <location>
        <begin position="168"/>
        <end position="175"/>
    </location>
</feature>
<feature type="helix" evidence="15">
    <location>
        <begin position="180"/>
        <end position="183"/>
    </location>
</feature>
<feature type="turn" evidence="15">
    <location>
        <begin position="184"/>
        <end position="189"/>
    </location>
</feature>
<feature type="strand" evidence="15">
    <location>
        <begin position="191"/>
        <end position="200"/>
    </location>
</feature>
<feature type="strand" evidence="15">
    <location>
        <begin position="209"/>
        <end position="217"/>
    </location>
</feature>
<feature type="helix" evidence="15">
    <location>
        <begin position="223"/>
        <end position="226"/>
    </location>
</feature>
<comment type="function">
    <text evidence="3 4 5 6 7">N-acetyltransferase involved in oxidative stress resistance. Acetylates the toxic proline metabolism intermediate (S)-1-pyrroline-5-carboxylate (P5C), or more likely its spontaneously forming tautomer glutamate-5-semialdehyde (GSA) into N-acetyl-GSA for arginine synthesis in the mitochondria. P5C has been shown to increase the levels of reactive oxygen species (ROS) in the cell by inhibiting the function of the respiratory chain in the mitochondria. The enzyme is able to reduce intracellular ROS levels under P5C-induced oxidative stress and protects cells from damage by oxidative stress (PubMed:15308773, PubMed:20550582, PubMed:22698729). Also acetylates and thereby detoxifies the proline analog azetidine-2-carboxylate (AZC), however it is unlikely that AZC is a natural substrate as it occurs only in plants belonging to the Lilaceae family (PubMed:11555637). Does not acetylate proline (PubMed:11555637, PubMed:12761200).</text>
</comment>
<comment type="catalytic activity">
    <reaction evidence="5">
        <text>L-glutamate 5-semialdehyde + acetyl-CoA = N-acetyl-L-glutamate 5-semialdehyde + CoA + H(+)</text>
        <dbReference type="Rhea" id="RHEA:48232"/>
        <dbReference type="ChEBI" id="CHEBI:15378"/>
        <dbReference type="ChEBI" id="CHEBI:29123"/>
        <dbReference type="ChEBI" id="CHEBI:57287"/>
        <dbReference type="ChEBI" id="CHEBI:57288"/>
        <dbReference type="ChEBI" id="CHEBI:58066"/>
        <dbReference type="EC" id="2.3.1.271"/>
    </reaction>
</comment>
<comment type="biophysicochemical properties">
    <kinetics>
        <KM evidence="8">20.9 mM for azetidine-2-carboxylate</KM>
        <KM evidence="5">0.9 mM for azetidine-2-carboxylate</KM>
        <KM evidence="5">7.019 mM for (S)-1-pyrroline-5-carboxylate</KM>
        <KM evidence="8">4.3 mM for acetyl-CoA</KM>
        <text evidence="5">kcat is 17.9 sec(-1) with azetidine-2-carboxylate as substrate and 121 sec(-1) with (S)-1-pyrroline-5-carboxylate as substrate.</text>
    </kinetics>
    <phDependence>
        <text evidence="4 5">Optimum pH is 8.5-9 for azetidine-2-carboxylate and 6.5-7 for (S)-1-pyrroline-5-carboxylate.</text>
    </phDependence>
    <temperatureDependence>
        <text evidence="4">Optimum temperature is 35 degrees Celsius.</text>
    </temperatureDependence>
</comment>
<comment type="subunit">
    <text evidence="4 8">Homodimer.</text>
</comment>
<comment type="subcellular location">
    <subcellularLocation>
        <location evidence="3 6">Cytoplasm</location>
    </subcellularLocation>
    <subcellularLocation>
        <location evidence="6">Mitochondrion</location>
    </subcellularLocation>
</comment>
<comment type="PTM">
    <text evidence="3">Not glycosylated.</text>
</comment>
<comment type="similarity">
    <text evidence="10">Belongs to the acetyltransferase family.</text>
</comment>
<name>MPR1_YEASX</name>
<proteinExistence type="evidence at protein level"/>
<accession>E9P8D2</accession>
<keyword id="KW-0002">3D-structure</keyword>
<keyword id="KW-0012">Acyltransferase</keyword>
<keyword id="KW-0963">Cytoplasm</keyword>
<keyword id="KW-0496">Mitochondrion</keyword>
<keyword id="KW-0808">Transferase</keyword>
<evidence type="ECO:0000255" key="1">
    <source>
        <dbReference type="PROSITE-ProRule" id="PRU00532"/>
    </source>
</evidence>
<evidence type="ECO:0000269" key="2">
    <source>
    </source>
</evidence>
<evidence type="ECO:0000269" key="3">
    <source>
    </source>
</evidence>
<evidence type="ECO:0000269" key="4">
    <source>
    </source>
</evidence>
<evidence type="ECO:0000269" key="5">
    <source>
    </source>
</evidence>
<evidence type="ECO:0000269" key="6">
    <source>
    </source>
</evidence>
<evidence type="ECO:0000269" key="7">
    <source>
    </source>
</evidence>
<evidence type="ECO:0000269" key="8">
    <source>
    </source>
</evidence>
<evidence type="ECO:0000303" key="9">
    <source>
    </source>
</evidence>
<evidence type="ECO:0000305" key="10"/>
<evidence type="ECO:0000305" key="11">
    <source>
    </source>
</evidence>
<evidence type="ECO:0007744" key="12">
    <source>
        <dbReference type="PDB" id="3W6S"/>
    </source>
</evidence>
<evidence type="ECO:0007744" key="13">
    <source>
        <dbReference type="PDB" id="3W6X"/>
    </source>
</evidence>
<evidence type="ECO:0007744" key="14">
    <source>
        <dbReference type="PDB" id="3W91"/>
    </source>
</evidence>
<evidence type="ECO:0007829" key="15">
    <source>
        <dbReference type="PDB" id="3W6S"/>
    </source>
</evidence>
<dbReference type="EC" id="2.3.1.271"/>
<dbReference type="EMBL" id="AB031349">
    <property type="protein sequence ID" value="BAA95611.1"/>
    <property type="molecule type" value="Genomic_DNA"/>
</dbReference>
<dbReference type="PDB" id="3W6S">
    <property type="method" value="X-ray"/>
    <property type="resolution" value="1.90 A"/>
    <property type="chains" value="A/B/C=1-229"/>
</dbReference>
<dbReference type="PDB" id="3W6X">
    <property type="method" value="X-ray"/>
    <property type="resolution" value="2.30 A"/>
    <property type="chains" value="A/B/C/D/E/F/G/H/I/J/K/L=1-229"/>
</dbReference>
<dbReference type="PDB" id="3W91">
    <property type="method" value="X-ray"/>
    <property type="resolution" value="2.10 A"/>
    <property type="chains" value="A/B/C=1-229"/>
</dbReference>
<dbReference type="PDBsum" id="3W6S"/>
<dbReference type="PDBsum" id="3W6X"/>
<dbReference type="PDBsum" id="3W91"/>
<dbReference type="SMR" id="E9P8D2"/>
<dbReference type="KEGG" id="ag:BAA95611"/>
<dbReference type="SGD" id="S000029666">
    <property type="gene designation" value="MPR1"/>
</dbReference>
<dbReference type="VEuPathDB" id="FungiDB:YJL127C"/>
<dbReference type="BioCyc" id="MetaCyc:MONOMER-20450"/>
<dbReference type="BRENDA" id="2.3.1.271">
    <property type="organism ID" value="984"/>
</dbReference>
<dbReference type="EvolutionaryTrace" id="E9P8D2"/>
<dbReference type="GO" id="GO:0005829">
    <property type="term" value="C:cytosol"/>
    <property type="evidence" value="ECO:0000314"/>
    <property type="project" value="SGD"/>
</dbReference>
<dbReference type="GO" id="GO:0005739">
    <property type="term" value="C:mitochondrion"/>
    <property type="evidence" value="ECO:0000314"/>
    <property type="project" value="SGD"/>
</dbReference>
<dbReference type="GO" id="GO:0005634">
    <property type="term" value="C:nucleus"/>
    <property type="evidence" value="ECO:0007669"/>
    <property type="project" value="TreeGrafter"/>
</dbReference>
<dbReference type="GO" id="GO:0046941">
    <property type="term" value="F:azetidine-2-carboxylic acid acetyltransferase activity"/>
    <property type="evidence" value="ECO:0000314"/>
    <property type="project" value="SGD"/>
</dbReference>
<dbReference type="GO" id="GO:0006526">
    <property type="term" value="P:L-arginine biosynthetic process"/>
    <property type="evidence" value="ECO:0000316"/>
    <property type="project" value="SGD"/>
</dbReference>
<dbReference type="GO" id="GO:0006562">
    <property type="term" value="P:proline catabolic process"/>
    <property type="evidence" value="ECO:0000316"/>
    <property type="project" value="SGD"/>
</dbReference>
<dbReference type="Gene3D" id="3.40.630.30">
    <property type="match status" value="1"/>
</dbReference>
<dbReference type="InterPro" id="IPR016181">
    <property type="entry name" value="Acyl_CoA_acyltransferase"/>
</dbReference>
<dbReference type="InterPro" id="IPR000182">
    <property type="entry name" value="GNAT_dom"/>
</dbReference>
<dbReference type="InterPro" id="IPR052742">
    <property type="entry name" value="Mito_N-acetyltransferase"/>
</dbReference>
<dbReference type="PANTHER" id="PTHR43138">
    <property type="entry name" value="ACETYLTRANSFERASE, GNAT FAMILY"/>
    <property type="match status" value="1"/>
</dbReference>
<dbReference type="PANTHER" id="PTHR43138:SF1">
    <property type="entry name" value="N-ACETYLTRANSFERASE ACA1"/>
    <property type="match status" value="1"/>
</dbReference>
<dbReference type="Pfam" id="PF00583">
    <property type="entry name" value="Acetyltransf_1"/>
    <property type="match status" value="1"/>
</dbReference>
<dbReference type="SUPFAM" id="SSF55729">
    <property type="entry name" value="Acyl-CoA N-acyltransferases (Nat)"/>
    <property type="match status" value="1"/>
</dbReference>
<protein>
    <recommendedName>
        <fullName>N-acetyltransferase MPR1</fullName>
        <ecNumber>2.3.1.271</ecNumber>
    </recommendedName>
    <alternativeName>
        <fullName>(S)-1-pyrroline-5-carboxylate acetyltransferase</fullName>
    </alternativeName>
    <alternativeName>
        <fullName>L-azetidine-2-carboxylate acetyltransferase</fullName>
        <shortName>AZC acetyltransferase</shortName>
    </alternativeName>
    <alternativeName>
        <fullName>Sigma1278b gene for proline-analog resistance 1</fullName>
    </alternativeName>
</protein>